<evidence type="ECO:0000255" key="1">
    <source>
        <dbReference type="HAMAP-Rule" id="MF_01408"/>
    </source>
</evidence>
<evidence type="ECO:0000255" key="2">
    <source>
        <dbReference type="PROSITE-ProRule" id="PRU00661"/>
    </source>
</evidence>
<gene>
    <name evidence="1" type="primary">thyX</name>
    <name type="ordered locus">THA_203</name>
</gene>
<reference key="1">
    <citation type="journal article" date="2009" name="J. Bacteriol.">
        <title>The genome of Thermosipho africanus TCF52B: lateral genetic connections to the Firmicutes and Archaea.</title>
        <authorList>
            <person name="Nesboe C.L."/>
            <person name="Bapteste E."/>
            <person name="Curtis B."/>
            <person name="Dahle H."/>
            <person name="Lopez P."/>
            <person name="Macleod D."/>
            <person name="Dlutek M."/>
            <person name="Bowman S."/>
            <person name="Zhaxybayeva O."/>
            <person name="Birkeland N.-K."/>
            <person name="Doolittle W.F."/>
        </authorList>
    </citation>
    <scope>NUCLEOTIDE SEQUENCE [LARGE SCALE GENOMIC DNA]</scope>
    <source>
        <strain>TCF52B</strain>
    </source>
</reference>
<proteinExistence type="inferred from homology"/>
<dbReference type="EC" id="2.1.1.148" evidence="1"/>
<dbReference type="EMBL" id="CP001185">
    <property type="protein sequence ID" value="ACJ74708.1"/>
    <property type="molecule type" value="Genomic_DNA"/>
</dbReference>
<dbReference type="RefSeq" id="WP_012579410.1">
    <property type="nucleotide sequence ID" value="NC_011653.1"/>
</dbReference>
<dbReference type="SMR" id="B7IF44"/>
<dbReference type="STRING" id="484019.THA_203"/>
<dbReference type="KEGG" id="taf:THA_203"/>
<dbReference type="eggNOG" id="COG1351">
    <property type="taxonomic scope" value="Bacteria"/>
</dbReference>
<dbReference type="HOGENOM" id="CLU_067790_0_0_0"/>
<dbReference type="OrthoDB" id="9774464at2"/>
<dbReference type="UniPathway" id="UPA00575"/>
<dbReference type="Proteomes" id="UP000002453">
    <property type="component" value="Chromosome"/>
</dbReference>
<dbReference type="GO" id="GO:0050660">
    <property type="term" value="F:flavin adenine dinucleotide binding"/>
    <property type="evidence" value="ECO:0007669"/>
    <property type="project" value="InterPro"/>
</dbReference>
<dbReference type="GO" id="GO:0070402">
    <property type="term" value="F:NADPH binding"/>
    <property type="evidence" value="ECO:0007669"/>
    <property type="project" value="TreeGrafter"/>
</dbReference>
<dbReference type="GO" id="GO:0050797">
    <property type="term" value="F:thymidylate synthase (FAD) activity"/>
    <property type="evidence" value="ECO:0007669"/>
    <property type="project" value="UniProtKB-UniRule"/>
</dbReference>
<dbReference type="GO" id="GO:0004799">
    <property type="term" value="F:thymidylate synthase activity"/>
    <property type="evidence" value="ECO:0007669"/>
    <property type="project" value="TreeGrafter"/>
</dbReference>
<dbReference type="GO" id="GO:0006231">
    <property type="term" value="P:dTMP biosynthetic process"/>
    <property type="evidence" value="ECO:0007669"/>
    <property type="project" value="UniProtKB-UniRule"/>
</dbReference>
<dbReference type="GO" id="GO:0006235">
    <property type="term" value="P:dTTP biosynthetic process"/>
    <property type="evidence" value="ECO:0007669"/>
    <property type="project" value="UniProtKB-UniRule"/>
</dbReference>
<dbReference type="GO" id="GO:0032259">
    <property type="term" value="P:methylation"/>
    <property type="evidence" value="ECO:0007669"/>
    <property type="project" value="UniProtKB-KW"/>
</dbReference>
<dbReference type="CDD" id="cd20175">
    <property type="entry name" value="ThyX"/>
    <property type="match status" value="1"/>
</dbReference>
<dbReference type="Gene3D" id="3.30.1360.170">
    <property type="match status" value="1"/>
</dbReference>
<dbReference type="HAMAP" id="MF_01408">
    <property type="entry name" value="ThyX"/>
    <property type="match status" value="1"/>
</dbReference>
<dbReference type="InterPro" id="IPR003669">
    <property type="entry name" value="Thymidylate_synthase_ThyX"/>
</dbReference>
<dbReference type="InterPro" id="IPR036098">
    <property type="entry name" value="Thymidylate_synthase_ThyX_sf"/>
</dbReference>
<dbReference type="NCBIfam" id="TIGR02170">
    <property type="entry name" value="thyX"/>
    <property type="match status" value="1"/>
</dbReference>
<dbReference type="PANTHER" id="PTHR34934">
    <property type="entry name" value="FLAVIN-DEPENDENT THYMIDYLATE SYNTHASE"/>
    <property type="match status" value="1"/>
</dbReference>
<dbReference type="PANTHER" id="PTHR34934:SF1">
    <property type="entry name" value="FLAVIN-DEPENDENT THYMIDYLATE SYNTHASE"/>
    <property type="match status" value="1"/>
</dbReference>
<dbReference type="Pfam" id="PF02511">
    <property type="entry name" value="Thy1"/>
    <property type="match status" value="1"/>
</dbReference>
<dbReference type="SUPFAM" id="SSF69796">
    <property type="entry name" value="Thymidylate synthase-complementing protein Thy1"/>
    <property type="match status" value="1"/>
</dbReference>
<dbReference type="PROSITE" id="PS51331">
    <property type="entry name" value="THYX"/>
    <property type="match status" value="1"/>
</dbReference>
<feature type="chain" id="PRO_1000184601" description="Flavin-dependent thymidylate synthase">
    <location>
        <begin position="1"/>
        <end position="228"/>
    </location>
</feature>
<feature type="domain" description="ThyX" evidence="2">
    <location>
        <begin position="1"/>
        <end position="217"/>
    </location>
</feature>
<feature type="short sequence motif" description="ThyX motif" evidence="1">
    <location>
        <begin position="78"/>
        <end position="88"/>
    </location>
</feature>
<feature type="active site" description="Involved in ionization of N3 of dUMP, leading to its activation" evidence="1">
    <location>
        <position position="183"/>
    </location>
</feature>
<feature type="binding site" evidence="1">
    <location>
        <position position="55"/>
    </location>
    <ligand>
        <name>FAD</name>
        <dbReference type="ChEBI" id="CHEBI:57692"/>
        <note>ligand shared between neighboring subunits</note>
    </ligand>
</feature>
<feature type="binding site" evidence="1">
    <location>
        <begin position="75"/>
        <end position="78"/>
    </location>
    <ligand>
        <name>dUMP</name>
        <dbReference type="ChEBI" id="CHEBI:246422"/>
        <note>ligand shared between dimeric partners</note>
    </ligand>
</feature>
<feature type="binding site" evidence="1">
    <location>
        <begin position="78"/>
        <end position="80"/>
    </location>
    <ligand>
        <name>FAD</name>
        <dbReference type="ChEBI" id="CHEBI:57692"/>
        <note>ligand shared between neighboring subunits</note>
    </ligand>
</feature>
<feature type="binding site" description="in other chain" evidence="1">
    <location>
        <begin position="86"/>
        <end position="90"/>
    </location>
    <ligand>
        <name>dUMP</name>
        <dbReference type="ChEBI" id="CHEBI:246422"/>
        <note>ligand shared between dimeric partners</note>
    </ligand>
</feature>
<feature type="binding site" evidence="1">
    <location>
        <position position="86"/>
    </location>
    <ligand>
        <name>FAD</name>
        <dbReference type="ChEBI" id="CHEBI:57692"/>
        <note>ligand shared between neighboring subunits</note>
    </ligand>
</feature>
<feature type="binding site" description="in other chain" evidence="1">
    <location>
        <position position="156"/>
    </location>
    <ligand>
        <name>dUMP</name>
        <dbReference type="ChEBI" id="CHEBI:246422"/>
        <note>ligand shared between dimeric partners</note>
    </ligand>
</feature>
<feature type="binding site" evidence="1">
    <location>
        <begin position="172"/>
        <end position="174"/>
    </location>
    <ligand>
        <name>FAD</name>
        <dbReference type="ChEBI" id="CHEBI:57692"/>
        <note>ligand shared between neighboring subunits</note>
    </ligand>
</feature>
<feature type="binding site" evidence="1">
    <location>
        <position position="178"/>
    </location>
    <ligand>
        <name>FAD</name>
        <dbReference type="ChEBI" id="CHEBI:57692"/>
        <note>ligand shared between neighboring subunits</note>
    </ligand>
</feature>
<feature type="binding site" evidence="1">
    <location>
        <position position="183"/>
    </location>
    <ligand>
        <name>dUMP</name>
        <dbReference type="ChEBI" id="CHEBI:246422"/>
        <note>ligand shared between dimeric partners</note>
    </ligand>
</feature>
<sequence length="228" mass="26827">MEYKILDKGFLRLVDMMGDDYAAVKAARVSYGKGIKTPEKDKNLIFYLMEHGHETPFEHIVFTFHVKAPIFVARQWFRHRIGSFNEASLRYTELKDEFYIPDHVRKNVVEDKQKAIKVDDEQLKQKALDLIESSIENSYKVYKELLEMGVAREMARIVLPMSSYTQFYWTVNARSLMNFLNLRADSHAQWEIQQYALNIANIFKEKCPWTFEAFLKFAYKGDLLKGGE</sequence>
<organism>
    <name type="scientific">Thermosipho africanus (strain TCF52B)</name>
    <dbReference type="NCBI Taxonomy" id="484019"/>
    <lineage>
        <taxon>Bacteria</taxon>
        <taxon>Thermotogati</taxon>
        <taxon>Thermotogota</taxon>
        <taxon>Thermotogae</taxon>
        <taxon>Thermotogales</taxon>
        <taxon>Fervidobacteriaceae</taxon>
        <taxon>Thermosipho</taxon>
    </lineage>
</organism>
<comment type="function">
    <text evidence="1">Catalyzes the reductive methylation of 2'-deoxyuridine-5'-monophosphate (dUMP) to 2'-deoxythymidine-5'-monophosphate (dTMP) while utilizing 5,10-methylenetetrahydrofolate (mTHF) as the methyl donor, and NADPH and FADH(2) as the reductant.</text>
</comment>
<comment type="catalytic activity">
    <reaction evidence="1">
        <text>dUMP + (6R)-5,10-methylene-5,6,7,8-tetrahydrofolate + NADPH + H(+) = dTMP + (6S)-5,6,7,8-tetrahydrofolate + NADP(+)</text>
        <dbReference type="Rhea" id="RHEA:29043"/>
        <dbReference type="ChEBI" id="CHEBI:15378"/>
        <dbReference type="ChEBI" id="CHEBI:15636"/>
        <dbReference type="ChEBI" id="CHEBI:57453"/>
        <dbReference type="ChEBI" id="CHEBI:57783"/>
        <dbReference type="ChEBI" id="CHEBI:58349"/>
        <dbReference type="ChEBI" id="CHEBI:63528"/>
        <dbReference type="ChEBI" id="CHEBI:246422"/>
        <dbReference type="EC" id="2.1.1.148"/>
    </reaction>
</comment>
<comment type="cofactor">
    <cofactor evidence="1">
        <name>FAD</name>
        <dbReference type="ChEBI" id="CHEBI:57692"/>
    </cofactor>
    <text evidence="1">Binds 4 FAD per tetramer. Each FAD binding site is formed by three monomers.</text>
</comment>
<comment type="pathway">
    <text evidence="1">Pyrimidine metabolism; dTTP biosynthesis.</text>
</comment>
<comment type="subunit">
    <text evidence="1">Homotetramer.</text>
</comment>
<comment type="similarity">
    <text evidence="1">Belongs to the thymidylate synthase ThyX family.</text>
</comment>
<accession>B7IF44</accession>
<protein>
    <recommendedName>
        <fullName evidence="1">Flavin-dependent thymidylate synthase</fullName>
        <shortName evidence="1">FDTS</shortName>
        <ecNumber evidence="1">2.1.1.148</ecNumber>
    </recommendedName>
    <alternativeName>
        <fullName evidence="1">FAD-dependent thymidylate synthase</fullName>
    </alternativeName>
    <alternativeName>
        <fullName evidence="1">Thymidylate synthase ThyX</fullName>
        <shortName evidence="1">TS</shortName>
        <shortName evidence="1">TSase</shortName>
    </alternativeName>
</protein>
<name>THYX_THEAB</name>
<keyword id="KW-0274">FAD</keyword>
<keyword id="KW-0285">Flavoprotein</keyword>
<keyword id="KW-0489">Methyltransferase</keyword>
<keyword id="KW-0521">NADP</keyword>
<keyword id="KW-0545">Nucleotide biosynthesis</keyword>
<keyword id="KW-1185">Reference proteome</keyword>
<keyword id="KW-0808">Transferase</keyword>